<proteinExistence type="inferred from homology"/>
<name>SYK_THESQ</name>
<sequence length="502" mass="59025">MLKEFKEQRLNEIQELRSMGIEPYPYKFEKELTAREIREKYDYLQAGEVLESEKLSFAGRVMSIRHHGKTAFFHMKDDTGRIQAYVRADSVGKEKMDLFKRHVKIGDFIGVRGFPFKSKTGELTIYVQEYTLLSKALRPLPEKWHGIKDKEIIYRQRYLELIVSDEAIERFRKRFKAVQVIREFLNSRGFIEVETPILHYVTGGAEARPFVTHLNVFDIDMYLRIAPELYLKRLIIGGFEKIYEIGKNFRNEGISYKHSPEFTSIEIYQAYADYNDMMDLTEELIVEVVKRTCGTLKISYQGKEIDFTPPWKRVRMRDFLKEKLGVDILEDPDEVLLKKLEEYGVELEIKNRAHLIDKLRDLVEEELVNPTFIIDHPVVISPLAKRHREDPRLTERFELIIFGREIANAFSELNDPVDQYQRFLEQAKMREEGDEEAHMMDLDFVRALEYGMPPTGGLGIGLDRLFMFITDSPTIRDVIPFPIVKPKKFEEEEAEFEGGFEE</sequence>
<dbReference type="EC" id="6.1.1.6" evidence="1"/>
<dbReference type="EMBL" id="CP000969">
    <property type="protein sequence ID" value="ACB09474.1"/>
    <property type="molecule type" value="Genomic_DNA"/>
</dbReference>
<dbReference type="RefSeq" id="WP_012310962.1">
    <property type="nucleotide sequence ID" value="NC_010483.1"/>
</dbReference>
<dbReference type="SMR" id="B1LAX6"/>
<dbReference type="KEGG" id="trq:TRQ2_1129"/>
<dbReference type="HOGENOM" id="CLU_008255_6_0_0"/>
<dbReference type="Proteomes" id="UP000001687">
    <property type="component" value="Chromosome"/>
</dbReference>
<dbReference type="GO" id="GO:0005829">
    <property type="term" value="C:cytosol"/>
    <property type="evidence" value="ECO:0007669"/>
    <property type="project" value="TreeGrafter"/>
</dbReference>
<dbReference type="GO" id="GO:0005524">
    <property type="term" value="F:ATP binding"/>
    <property type="evidence" value="ECO:0007669"/>
    <property type="project" value="UniProtKB-UniRule"/>
</dbReference>
<dbReference type="GO" id="GO:0004824">
    <property type="term" value="F:lysine-tRNA ligase activity"/>
    <property type="evidence" value="ECO:0007669"/>
    <property type="project" value="UniProtKB-UniRule"/>
</dbReference>
<dbReference type="GO" id="GO:0000287">
    <property type="term" value="F:magnesium ion binding"/>
    <property type="evidence" value="ECO:0007669"/>
    <property type="project" value="UniProtKB-UniRule"/>
</dbReference>
<dbReference type="GO" id="GO:0000049">
    <property type="term" value="F:tRNA binding"/>
    <property type="evidence" value="ECO:0007669"/>
    <property type="project" value="TreeGrafter"/>
</dbReference>
<dbReference type="GO" id="GO:0006430">
    <property type="term" value="P:lysyl-tRNA aminoacylation"/>
    <property type="evidence" value="ECO:0007669"/>
    <property type="project" value="UniProtKB-UniRule"/>
</dbReference>
<dbReference type="CDD" id="cd00775">
    <property type="entry name" value="LysRS_core"/>
    <property type="match status" value="1"/>
</dbReference>
<dbReference type="CDD" id="cd04322">
    <property type="entry name" value="LysRS_N"/>
    <property type="match status" value="1"/>
</dbReference>
<dbReference type="FunFam" id="2.40.50.140:FF:000024">
    <property type="entry name" value="Lysine--tRNA ligase"/>
    <property type="match status" value="1"/>
</dbReference>
<dbReference type="FunFam" id="3.30.930.10:FF:000238">
    <property type="entry name" value="Lysine--tRNA ligase"/>
    <property type="match status" value="1"/>
</dbReference>
<dbReference type="Gene3D" id="3.30.930.10">
    <property type="entry name" value="Bira Bifunctional Protein, Domain 2"/>
    <property type="match status" value="1"/>
</dbReference>
<dbReference type="Gene3D" id="2.40.50.140">
    <property type="entry name" value="Nucleic acid-binding proteins"/>
    <property type="match status" value="1"/>
</dbReference>
<dbReference type="HAMAP" id="MF_00252">
    <property type="entry name" value="Lys_tRNA_synth_class2"/>
    <property type="match status" value="1"/>
</dbReference>
<dbReference type="InterPro" id="IPR004364">
    <property type="entry name" value="Aa-tRNA-synt_II"/>
</dbReference>
<dbReference type="InterPro" id="IPR006195">
    <property type="entry name" value="aa-tRNA-synth_II"/>
</dbReference>
<dbReference type="InterPro" id="IPR045864">
    <property type="entry name" value="aa-tRNA-synth_II/BPL/LPL"/>
</dbReference>
<dbReference type="InterPro" id="IPR002313">
    <property type="entry name" value="Lys-tRNA-ligase_II"/>
</dbReference>
<dbReference type="InterPro" id="IPR034762">
    <property type="entry name" value="Lys-tRNA-ligase_II_bac/euk"/>
</dbReference>
<dbReference type="InterPro" id="IPR044136">
    <property type="entry name" value="Lys-tRNA-ligase_II_N"/>
</dbReference>
<dbReference type="InterPro" id="IPR018149">
    <property type="entry name" value="Lys-tRNA-synth_II_C"/>
</dbReference>
<dbReference type="InterPro" id="IPR012340">
    <property type="entry name" value="NA-bd_OB-fold"/>
</dbReference>
<dbReference type="InterPro" id="IPR004365">
    <property type="entry name" value="NA-bd_OB_tRNA"/>
</dbReference>
<dbReference type="NCBIfam" id="TIGR00499">
    <property type="entry name" value="lysS_bact"/>
    <property type="match status" value="1"/>
</dbReference>
<dbReference type="NCBIfam" id="NF001756">
    <property type="entry name" value="PRK00484.1"/>
    <property type="match status" value="1"/>
</dbReference>
<dbReference type="PANTHER" id="PTHR42918:SF15">
    <property type="entry name" value="LYSINE--TRNA LIGASE, CHLOROPLASTIC_MITOCHONDRIAL"/>
    <property type="match status" value="1"/>
</dbReference>
<dbReference type="PANTHER" id="PTHR42918">
    <property type="entry name" value="LYSYL-TRNA SYNTHETASE"/>
    <property type="match status" value="1"/>
</dbReference>
<dbReference type="Pfam" id="PF00152">
    <property type="entry name" value="tRNA-synt_2"/>
    <property type="match status" value="1"/>
</dbReference>
<dbReference type="Pfam" id="PF01336">
    <property type="entry name" value="tRNA_anti-codon"/>
    <property type="match status" value="1"/>
</dbReference>
<dbReference type="PIRSF" id="PIRSF039101">
    <property type="entry name" value="LysRS2"/>
    <property type="match status" value="1"/>
</dbReference>
<dbReference type="PRINTS" id="PR00982">
    <property type="entry name" value="TRNASYNTHLYS"/>
</dbReference>
<dbReference type="SUPFAM" id="SSF55681">
    <property type="entry name" value="Class II aaRS and biotin synthetases"/>
    <property type="match status" value="1"/>
</dbReference>
<dbReference type="SUPFAM" id="SSF50249">
    <property type="entry name" value="Nucleic acid-binding proteins"/>
    <property type="match status" value="1"/>
</dbReference>
<dbReference type="PROSITE" id="PS50862">
    <property type="entry name" value="AA_TRNA_LIGASE_II"/>
    <property type="match status" value="1"/>
</dbReference>
<reference key="1">
    <citation type="journal article" date="2011" name="J. Bacteriol.">
        <title>Genome sequence of Thermotoga sp. strain RQ2, a hyperthermophilic bacterium isolated from a geothermally heated region of the seafloor near Ribeira Quente, the Azores.</title>
        <authorList>
            <person name="Swithers K.S."/>
            <person name="DiPippo J.L."/>
            <person name="Bruce D.C."/>
            <person name="Detter C."/>
            <person name="Tapia R."/>
            <person name="Han S."/>
            <person name="Saunders E."/>
            <person name="Goodwin L.A."/>
            <person name="Han J."/>
            <person name="Woyke T."/>
            <person name="Pitluck S."/>
            <person name="Pennacchio L."/>
            <person name="Nolan M."/>
            <person name="Mikhailova N."/>
            <person name="Lykidis A."/>
            <person name="Land M.L."/>
            <person name="Brettin T."/>
            <person name="Stetter K.O."/>
            <person name="Nelson K.E."/>
            <person name="Gogarten J.P."/>
            <person name="Noll K.M."/>
        </authorList>
    </citation>
    <scope>NUCLEOTIDE SEQUENCE [LARGE SCALE GENOMIC DNA]</scope>
    <source>
        <strain>RQ2</strain>
    </source>
</reference>
<evidence type="ECO:0000255" key="1">
    <source>
        <dbReference type="HAMAP-Rule" id="MF_00252"/>
    </source>
</evidence>
<keyword id="KW-0030">Aminoacyl-tRNA synthetase</keyword>
<keyword id="KW-0067">ATP-binding</keyword>
<keyword id="KW-0963">Cytoplasm</keyword>
<keyword id="KW-0436">Ligase</keyword>
<keyword id="KW-0460">Magnesium</keyword>
<keyword id="KW-0479">Metal-binding</keyword>
<keyword id="KW-0547">Nucleotide-binding</keyword>
<keyword id="KW-0648">Protein biosynthesis</keyword>
<gene>
    <name evidence="1" type="primary">lysS</name>
    <name type="ordered locus">TRQ2_1129</name>
</gene>
<comment type="catalytic activity">
    <reaction evidence="1">
        <text>tRNA(Lys) + L-lysine + ATP = L-lysyl-tRNA(Lys) + AMP + diphosphate</text>
        <dbReference type="Rhea" id="RHEA:20792"/>
        <dbReference type="Rhea" id="RHEA-COMP:9696"/>
        <dbReference type="Rhea" id="RHEA-COMP:9697"/>
        <dbReference type="ChEBI" id="CHEBI:30616"/>
        <dbReference type="ChEBI" id="CHEBI:32551"/>
        <dbReference type="ChEBI" id="CHEBI:33019"/>
        <dbReference type="ChEBI" id="CHEBI:78442"/>
        <dbReference type="ChEBI" id="CHEBI:78529"/>
        <dbReference type="ChEBI" id="CHEBI:456215"/>
        <dbReference type="EC" id="6.1.1.6"/>
    </reaction>
</comment>
<comment type="cofactor">
    <cofactor evidence="1">
        <name>Mg(2+)</name>
        <dbReference type="ChEBI" id="CHEBI:18420"/>
    </cofactor>
    <text evidence="1">Binds 3 Mg(2+) ions per subunit.</text>
</comment>
<comment type="subunit">
    <text evidence="1">Homodimer.</text>
</comment>
<comment type="subcellular location">
    <subcellularLocation>
        <location evidence="1">Cytoplasm</location>
    </subcellularLocation>
</comment>
<comment type="similarity">
    <text evidence="1">Belongs to the class-II aminoacyl-tRNA synthetase family.</text>
</comment>
<protein>
    <recommendedName>
        <fullName evidence="1">Lysine--tRNA ligase</fullName>
        <ecNumber evidence="1">6.1.1.6</ecNumber>
    </recommendedName>
    <alternativeName>
        <fullName evidence="1">Lysyl-tRNA synthetase</fullName>
        <shortName evidence="1">LysRS</shortName>
    </alternativeName>
</protein>
<feature type="chain" id="PRO_1000101156" description="Lysine--tRNA ligase">
    <location>
        <begin position="1"/>
        <end position="502"/>
    </location>
</feature>
<feature type="binding site" evidence="1">
    <location>
        <position position="398"/>
    </location>
    <ligand>
        <name>Mg(2+)</name>
        <dbReference type="ChEBI" id="CHEBI:18420"/>
        <label>1</label>
    </ligand>
</feature>
<feature type="binding site" evidence="1">
    <location>
        <position position="405"/>
    </location>
    <ligand>
        <name>Mg(2+)</name>
        <dbReference type="ChEBI" id="CHEBI:18420"/>
        <label>1</label>
    </ligand>
</feature>
<feature type="binding site" evidence="1">
    <location>
        <position position="405"/>
    </location>
    <ligand>
        <name>Mg(2+)</name>
        <dbReference type="ChEBI" id="CHEBI:18420"/>
        <label>2</label>
    </ligand>
</feature>
<organism>
    <name type="scientific">Thermotoga sp. (strain RQ2)</name>
    <dbReference type="NCBI Taxonomy" id="126740"/>
    <lineage>
        <taxon>Bacteria</taxon>
        <taxon>Thermotogati</taxon>
        <taxon>Thermotogota</taxon>
        <taxon>Thermotogae</taxon>
        <taxon>Thermotogales</taxon>
        <taxon>Thermotogaceae</taxon>
        <taxon>Thermotoga</taxon>
    </lineage>
</organism>
<accession>B1LAX6</accession>